<organism>
    <name type="scientific">Homo sapiens</name>
    <name type="common">Human</name>
    <dbReference type="NCBI Taxonomy" id="9606"/>
    <lineage>
        <taxon>Eukaryota</taxon>
        <taxon>Metazoa</taxon>
        <taxon>Chordata</taxon>
        <taxon>Craniata</taxon>
        <taxon>Vertebrata</taxon>
        <taxon>Euteleostomi</taxon>
        <taxon>Mammalia</taxon>
        <taxon>Eutheria</taxon>
        <taxon>Euarchontoglires</taxon>
        <taxon>Primates</taxon>
        <taxon>Haplorrhini</taxon>
        <taxon>Catarrhini</taxon>
        <taxon>Hominidae</taxon>
        <taxon>Homo</taxon>
    </lineage>
</organism>
<keyword id="KW-1003">Cell membrane</keyword>
<keyword id="KW-1015">Disulfide bond</keyword>
<keyword id="KW-0297">G-protein coupled receptor</keyword>
<keyword id="KW-0472">Membrane</keyword>
<keyword id="KW-0552">Olfaction</keyword>
<keyword id="KW-0675">Receptor</keyword>
<keyword id="KW-1185">Reference proteome</keyword>
<keyword id="KW-0716">Sensory transduction</keyword>
<keyword id="KW-0807">Transducer</keyword>
<keyword id="KW-0812">Transmembrane</keyword>
<keyword id="KW-1133">Transmembrane helix</keyword>
<reference key="1">
    <citation type="submission" date="2001-07" db="EMBL/GenBank/DDBJ databases">
        <title>Genome-wide discovery and analysis of human seven transmembrane helix receptor genes.</title>
        <authorList>
            <person name="Suwa M."/>
            <person name="Sato T."/>
            <person name="Okouchi I."/>
            <person name="Arita M."/>
            <person name="Futami K."/>
            <person name="Matsumoto S."/>
            <person name="Tsutsumi S."/>
            <person name="Aburatani H."/>
            <person name="Asai K."/>
            <person name="Akiyama Y."/>
        </authorList>
    </citation>
    <scope>NUCLEOTIDE SEQUENCE [GENOMIC DNA]</scope>
</reference>
<reference key="2">
    <citation type="journal article" date="2004" name="Genome Res.">
        <title>The status, quality, and expansion of the NIH full-length cDNA project: the Mammalian Gene Collection (MGC).</title>
        <authorList>
            <consortium name="The MGC Project Team"/>
        </authorList>
    </citation>
    <scope>NUCLEOTIDE SEQUENCE [LARGE SCALE MRNA]</scope>
</reference>
<reference key="3">
    <citation type="journal article" date="2004" name="Proc. Natl. Acad. Sci. U.S.A.">
        <title>The human olfactory receptor gene family.</title>
        <authorList>
            <person name="Malnic B."/>
            <person name="Godfrey P.A."/>
            <person name="Buck L.B."/>
        </authorList>
    </citation>
    <scope>IDENTIFICATION</scope>
</reference>
<reference key="4">
    <citation type="journal article" date="2004" name="Proc. Natl. Acad. Sci. U.S.A.">
        <authorList>
            <person name="Malnic B."/>
            <person name="Godfrey P.A."/>
            <person name="Buck L.B."/>
        </authorList>
    </citation>
    <scope>ERRATUM OF PUBMED:14983052</scope>
</reference>
<evidence type="ECO:0000255" key="1"/>
<evidence type="ECO:0000255" key="2">
    <source>
        <dbReference type="PROSITE-ProRule" id="PRU00521"/>
    </source>
</evidence>
<evidence type="ECO:0000305" key="3"/>
<name>O56B4_HUMAN</name>
<proteinExistence type="evidence at transcript level"/>
<gene>
    <name type="primary">OR56B4</name>
</gene>
<protein>
    <recommendedName>
        <fullName>Olfactory receptor 56B4</fullName>
    </recommendedName>
    <alternativeName>
        <fullName>Olfactory receptor OR11-67</fullName>
    </alternativeName>
</protein>
<accession>Q8NH76</accession>
<accession>Q6IFD7</accession>
<feature type="chain" id="PRO_0000150798" description="Olfactory receptor 56B4">
    <location>
        <begin position="1"/>
        <end position="319"/>
    </location>
</feature>
<feature type="topological domain" description="Extracellular" evidence="1">
    <location>
        <begin position="1"/>
        <end position="31"/>
    </location>
</feature>
<feature type="transmembrane region" description="Helical; Name=1" evidence="1">
    <location>
        <begin position="32"/>
        <end position="52"/>
    </location>
</feature>
<feature type="topological domain" description="Cytoplasmic" evidence="1">
    <location>
        <begin position="53"/>
        <end position="60"/>
    </location>
</feature>
<feature type="transmembrane region" description="Helical; Name=2" evidence="1">
    <location>
        <begin position="61"/>
        <end position="81"/>
    </location>
</feature>
<feature type="topological domain" description="Extracellular" evidence="1">
    <location>
        <begin position="82"/>
        <end position="105"/>
    </location>
</feature>
<feature type="transmembrane region" description="Helical; Name=3" evidence="1">
    <location>
        <begin position="106"/>
        <end position="126"/>
    </location>
</feature>
<feature type="topological domain" description="Cytoplasmic" evidence="1">
    <location>
        <begin position="127"/>
        <end position="145"/>
    </location>
</feature>
<feature type="transmembrane region" description="Helical; Name=4" evidence="1">
    <location>
        <begin position="146"/>
        <end position="166"/>
    </location>
</feature>
<feature type="topological domain" description="Extracellular" evidence="1">
    <location>
        <begin position="167"/>
        <end position="202"/>
    </location>
</feature>
<feature type="transmembrane region" description="Helical; Name=5" evidence="1">
    <location>
        <begin position="203"/>
        <end position="223"/>
    </location>
</feature>
<feature type="topological domain" description="Cytoplasmic" evidence="1">
    <location>
        <begin position="224"/>
        <end position="243"/>
    </location>
</feature>
<feature type="transmembrane region" description="Helical; Name=6" evidence="1">
    <location>
        <begin position="244"/>
        <end position="263"/>
    </location>
</feature>
<feature type="topological domain" description="Extracellular" evidence="1">
    <location>
        <begin position="264"/>
        <end position="277"/>
    </location>
</feature>
<feature type="transmembrane region" description="Helical; Name=7" evidence="1">
    <location>
        <begin position="278"/>
        <end position="298"/>
    </location>
</feature>
<feature type="topological domain" description="Cytoplasmic" evidence="1">
    <location>
        <begin position="299"/>
        <end position="319"/>
    </location>
</feature>
<feature type="disulfide bond" evidence="2">
    <location>
        <begin position="103"/>
        <end position="195"/>
    </location>
</feature>
<feature type="sequence variant" id="VAR_024153" description="In dbSNP:rs1462983.">
    <original>P</original>
    <variation>S</variation>
    <location>
        <position position="277"/>
    </location>
</feature>
<comment type="function">
    <text evidence="3">Odorant receptor.</text>
</comment>
<comment type="subcellular location">
    <subcellularLocation>
        <location>Cell membrane</location>
        <topology>Multi-pass membrane protein</topology>
    </subcellularLocation>
</comment>
<comment type="similarity">
    <text evidence="2">Belongs to the G-protein coupled receptor 1 family.</text>
</comment>
<comment type="online information" name="Human Olfactory Receptor Data Exploratorium (HORDE)">
    <link uri="http://genome.weizmann.ac.il/horde/card/index/symbol:OR56B4"/>
</comment>
<sequence length="319" mass="35454">MDTSTSVTYDSSLQISQFILMGLPGIHEWQHWLSLPLTLLYLLALGANLLIIITIQHETVLHEPMYHLLGILAVVDIGLATTIMPKILAIFWFDAKAISLPMCFAQIYAIHCFFCIESGIFLCMAVDRYIAICRPLQYPSIVTKAFVFKATGFIMLRNGLLTIPVPILAAQRHYCSRNEIEHCLCSNLGVISLACDDITVNKFYQLMLAWVLVGSDMALVFSSYAVILHSVLRLNSAEAMSKALSTCSSHLILILFHTGIIVLSVTHLAEKKIPLIPVFLNVLHNVIPPALNPLACALRMHKLRLGFQRLLGLGQDVSK</sequence>
<dbReference type="EMBL" id="AB065513">
    <property type="protein sequence ID" value="BAC05761.1"/>
    <property type="molecule type" value="Genomic_DNA"/>
</dbReference>
<dbReference type="EMBL" id="BC136879">
    <property type="protein sequence ID" value="AAI36880.1"/>
    <property type="molecule type" value="mRNA"/>
</dbReference>
<dbReference type="EMBL" id="BC136880">
    <property type="protein sequence ID" value="AAI36881.1"/>
    <property type="molecule type" value="mRNA"/>
</dbReference>
<dbReference type="EMBL" id="BK004325">
    <property type="protein sequence ID" value="DAA04723.1"/>
    <property type="molecule type" value="Genomic_DNA"/>
</dbReference>
<dbReference type="CCDS" id="CCDS31406.1"/>
<dbReference type="RefSeq" id="NP_001005181.1">
    <property type="nucleotide sequence ID" value="NM_001005181.2"/>
</dbReference>
<dbReference type="SMR" id="Q8NH76"/>
<dbReference type="BioGRID" id="128197">
    <property type="interactions" value="1"/>
</dbReference>
<dbReference type="FunCoup" id="Q8NH76">
    <property type="interactions" value="448"/>
</dbReference>
<dbReference type="IntAct" id="Q8NH76">
    <property type="interactions" value="1"/>
</dbReference>
<dbReference type="STRING" id="9606.ENSP00000321196"/>
<dbReference type="PhosphoSitePlus" id="Q8NH76"/>
<dbReference type="BioMuta" id="OR56B4"/>
<dbReference type="DMDM" id="38372824"/>
<dbReference type="PaxDb" id="9606-ENSP00000321196"/>
<dbReference type="Antibodypedia" id="57970">
    <property type="antibodies" value="46 antibodies from 16 providers"/>
</dbReference>
<dbReference type="DNASU" id="196335"/>
<dbReference type="Ensembl" id="ENST00000316529.3">
    <property type="protein sequence ID" value="ENSP00000321196.2"/>
    <property type="gene ID" value="ENSG00000180919.3"/>
</dbReference>
<dbReference type="GeneID" id="196335"/>
<dbReference type="KEGG" id="hsa:196335"/>
<dbReference type="MANE-Select" id="ENST00000316529.3">
    <property type="protein sequence ID" value="ENSP00000321196.2"/>
    <property type="RefSeq nucleotide sequence ID" value="NM_001005181.2"/>
    <property type="RefSeq protein sequence ID" value="NP_001005181.1"/>
</dbReference>
<dbReference type="UCSC" id="uc010qzx.3">
    <property type="organism name" value="human"/>
</dbReference>
<dbReference type="AGR" id="HGNC:15248"/>
<dbReference type="CTD" id="196335"/>
<dbReference type="GeneCards" id="OR56B4"/>
<dbReference type="HGNC" id="HGNC:15248">
    <property type="gene designation" value="OR56B4"/>
</dbReference>
<dbReference type="HPA" id="ENSG00000180919">
    <property type="expression patterns" value="Not detected"/>
</dbReference>
<dbReference type="neXtProt" id="NX_Q8NH76"/>
<dbReference type="PharmGKB" id="PA32453"/>
<dbReference type="VEuPathDB" id="HostDB:ENSG00000180919"/>
<dbReference type="eggNOG" id="ENOG502SJUD">
    <property type="taxonomic scope" value="Eukaryota"/>
</dbReference>
<dbReference type="GeneTree" id="ENSGT01130000278289"/>
<dbReference type="HOGENOM" id="CLU_012526_0_0_1"/>
<dbReference type="InParanoid" id="Q8NH76"/>
<dbReference type="OMA" id="KAFVFKA"/>
<dbReference type="OrthoDB" id="5969463at2759"/>
<dbReference type="PAN-GO" id="Q8NH76">
    <property type="GO annotations" value="0 GO annotations based on evolutionary models"/>
</dbReference>
<dbReference type="PhylomeDB" id="Q8NH76"/>
<dbReference type="TreeFam" id="TF344049"/>
<dbReference type="PathwayCommons" id="Q8NH76"/>
<dbReference type="Reactome" id="R-HSA-9752946">
    <property type="pathway name" value="Expression and translocation of olfactory receptors"/>
</dbReference>
<dbReference type="BioGRID-ORCS" id="196335">
    <property type="hits" value="11 hits in 748 CRISPR screens"/>
</dbReference>
<dbReference type="GeneWiki" id="OR56B4"/>
<dbReference type="GenomeRNAi" id="196335"/>
<dbReference type="Pharos" id="Q8NH76">
    <property type="development level" value="Tdark"/>
</dbReference>
<dbReference type="PRO" id="PR:Q8NH76"/>
<dbReference type="Proteomes" id="UP000005640">
    <property type="component" value="Chromosome 11"/>
</dbReference>
<dbReference type="RNAct" id="Q8NH76">
    <property type="molecule type" value="protein"/>
</dbReference>
<dbReference type="Bgee" id="ENSG00000180919">
    <property type="expression patterns" value="Expressed in primordial germ cell in gonad and 9 other cell types or tissues"/>
</dbReference>
<dbReference type="GO" id="GO:0005886">
    <property type="term" value="C:plasma membrane"/>
    <property type="evidence" value="ECO:0000318"/>
    <property type="project" value="GO_Central"/>
</dbReference>
<dbReference type="GO" id="GO:0004930">
    <property type="term" value="F:G protein-coupled receptor activity"/>
    <property type="evidence" value="ECO:0007669"/>
    <property type="project" value="UniProtKB-KW"/>
</dbReference>
<dbReference type="GO" id="GO:0004984">
    <property type="term" value="F:olfactory receptor activity"/>
    <property type="evidence" value="ECO:0000318"/>
    <property type="project" value="GO_Central"/>
</dbReference>
<dbReference type="FunFam" id="1.20.1070.10:FF:000002">
    <property type="entry name" value="Olfactory receptor"/>
    <property type="match status" value="1"/>
</dbReference>
<dbReference type="Gene3D" id="1.20.1070.10">
    <property type="entry name" value="Rhodopsin 7-helix transmembrane proteins"/>
    <property type="match status" value="1"/>
</dbReference>
<dbReference type="InterPro" id="IPR017452">
    <property type="entry name" value="GPCR_Rhodpsn_7TM"/>
</dbReference>
<dbReference type="InterPro" id="IPR000725">
    <property type="entry name" value="Olfact_rcpt"/>
</dbReference>
<dbReference type="InterPro" id="IPR050402">
    <property type="entry name" value="OR51/52/56-like"/>
</dbReference>
<dbReference type="PANTHER" id="PTHR26450">
    <property type="entry name" value="OLFACTORY RECEPTOR 56B1-RELATED"/>
    <property type="match status" value="1"/>
</dbReference>
<dbReference type="PANTHER" id="PTHR26450:SF142">
    <property type="entry name" value="OLFACTORY RECEPTOR 56B4"/>
    <property type="match status" value="1"/>
</dbReference>
<dbReference type="Pfam" id="PF13853">
    <property type="entry name" value="7tm_4"/>
    <property type="match status" value="1"/>
</dbReference>
<dbReference type="PRINTS" id="PR00245">
    <property type="entry name" value="OLFACTORYR"/>
</dbReference>
<dbReference type="SUPFAM" id="SSF81321">
    <property type="entry name" value="Family A G protein-coupled receptor-like"/>
    <property type="match status" value="1"/>
</dbReference>
<dbReference type="PROSITE" id="PS50262">
    <property type="entry name" value="G_PROTEIN_RECEP_F1_2"/>
    <property type="match status" value="1"/>
</dbReference>